<protein>
    <recommendedName>
        <fullName>Acidic phospholipase A2 S15-109</fullName>
        <shortName>svPLA2</shortName>
        <ecNumber>3.1.1.4</ecNumber>
    </recommendedName>
    <alternativeName>
        <fullName>ASPLA7</fullName>
    </alternativeName>
    <alternativeName>
        <fullName>Phosphatidylcholine 2-acylhydrolase</fullName>
    </alternativeName>
</protein>
<sequence>MYPAHLLVLLAVCVSLLGASDIPPQPLNLYQFGNMIQCANHGRRPTQHYTDYGCYCGKGGSGTPVDELDRCCKTHDDCYTEAGKKGCYPKLTLYSWKCGSDGPQCDDSETGCQRFVCDCDATAAKCFAKAPYNKENYNIKTPCQ</sequence>
<accession>Q9PUH7</accession>
<reference key="1">
    <citation type="journal article" date="2000" name="Arch. Biochem. Biophys.">
        <title>Phospholipase A(2) with platelet aggregation inhibitor activity from Austrelaps superbus venom: protein purification and cDNA cloning.</title>
        <authorList>
            <person name="Singh S.B."/>
            <person name="Armugam A."/>
            <person name="Kini R.M."/>
            <person name="Jeyaseelan K."/>
        </authorList>
    </citation>
    <scope>NUCLEOTIDE SEQUENCE [MRNA]</scope>
    <source>
        <tissue>Venom gland</tissue>
    </source>
</reference>
<proteinExistence type="evidence at transcript level"/>
<comment type="function">
    <text evidence="1">Snake venom phospholipase A2 (PLA2) that inhibits collagen-induced platelet aggregation. PLA2 catalyzes the calcium-dependent hydrolysis of the 2-acyl groups in 3-sn-phosphoglycerides (By similarity).</text>
</comment>
<comment type="catalytic activity">
    <reaction evidence="3 4">
        <text>a 1,2-diacyl-sn-glycero-3-phosphocholine + H2O = a 1-acyl-sn-glycero-3-phosphocholine + a fatty acid + H(+)</text>
        <dbReference type="Rhea" id="RHEA:15801"/>
        <dbReference type="ChEBI" id="CHEBI:15377"/>
        <dbReference type="ChEBI" id="CHEBI:15378"/>
        <dbReference type="ChEBI" id="CHEBI:28868"/>
        <dbReference type="ChEBI" id="CHEBI:57643"/>
        <dbReference type="ChEBI" id="CHEBI:58168"/>
        <dbReference type="EC" id="3.1.1.4"/>
    </reaction>
</comment>
<comment type="cofactor">
    <cofactor evidence="1">
        <name>Ca(2+)</name>
        <dbReference type="ChEBI" id="CHEBI:29108"/>
    </cofactor>
    <text evidence="1">Binds 1 Ca(2+) ion.</text>
</comment>
<comment type="subcellular location">
    <subcellularLocation>
        <location evidence="1">Secreted</location>
    </subcellularLocation>
</comment>
<comment type="tissue specificity">
    <text>Expressed by the venom gland.</text>
</comment>
<comment type="similarity">
    <text evidence="5">Belongs to the phospholipase A2 family. Group I subfamily. D49 sub-subfamily.</text>
</comment>
<dbReference type="EC" id="3.1.1.4"/>
<dbReference type="EMBL" id="AF184133">
    <property type="protein sequence ID" value="AAD56556.1"/>
    <property type="molecule type" value="mRNA"/>
</dbReference>
<dbReference type="SMR" id="Q9PUH7"/>
<dbReference type="GO" id="GO:0005576">
    <property type="term" value="C:extracellular region"/>
    <property type="evidence" value="ECO:0007669"/>
    <property type="project" value="UniProtKB-SubCell"/>
</dbReference>
<dbReference type="GO" id="GO:0005509">
    <property type="term" value="F:calcium ion binding"/>
    <property type="evidence" value="ECO:0007669"/>
    <property type="project" value="InterPro"/>
</dbReference>
<dbReference type="GO" id="GO:0047498">
    <property type="term" value="F:calcium-dependent phospholipase A2 activity"/>
    <property type="evidence" value="ECO:0007669"/>
    <property type="project" value="TreeGrafter"/>
</dbReference>
<dbReference type="GO" id="GO:0005543">
    <property type="term" value="F:phospholipid binding"/>
    <property type="evidence" value="ECO:0007669"/>
    <property type="project" value="TreeGrafter"/>
</dbReference>
<dbReference type="GO" id="GO:0090729">
    <property type="term" value="F:toxin activity"/>
    <property type="evidence" value="ECO:0007669"/>
    <property type="project" value="UniProtKB-KW"/>
</dbReference>
<dbReference type="GO" id="GO:0050482">
    <property type="term" value="P:arachidonate secretion"/>
    <property type="evidence" value="ECO:0007669"/>
    <property type="project" value="InterPro"/>
</dbReference>
<dbReference type="GO" id="GO:0016042">
    <property type="term" value="P:lipid catabolic process"/>
    <property type="evidence" value="ECO:0007669"/>
    <property type="project" value="UniProtKB-KW"/>
</dbReference>
<dbReference type="GO" id="GO:0006644">
    <property type="term" value="P:phospholipid metabolic process"/>
    <property type="evidence" value="ECO:0007669"/>
    <property type="project" value="InterPro"/>
</dbReference>
<dbReference type="CDD" id="cd00125">
    <property type="entry name" value="PLA2c"/>
    <property type="match status" value="1"/>
</dbReference>
<dbReference type="FunFam" id="1.20.90.10:FF:000007">
    <property type="entry name" value="Acidic phospholipase A2"/>
    <property type="match status" value="1"/>
</dbReference>
<dbReference type="Gene3D" id="1.20.90.10">
    <property type="entry name" value="Phospholipase A2 domain"/>
    <property type="match status" value="1"/>
</dbReference>
<dbReference type="InterPro" id="IPR001211">
    <property type="entry name" value="PLipase_A2"/>
</dbReference>
<dbReference type="InterPro" id="IPR033112">
    <property type="entry name" value="PLipase_A2_Asp_AS"/>
</dbReference>
<dbReference type="InterPro" id="IPR016090">
    <property type="entry name" value="PLipase_A2_dom"/>
</dbReference>
<dbReference type="InterPro" id="IPR036444">
    <property type="entry name" value="PLipase_A2_dom_sf"/>
</dbReference>
<dbReference type="InterPro" id="IPR033113">
    <property type="entry name" value="PLipase_A2_His_AS"/>
</dbReference>
<dbReference type="PANTHER" id="PTHR11716:SF51">
    <property type="entry name" value="PHOSPHOLIPASE A2"/>
    <property type="match status" value="1"/>
</dbReference>
<dbReference type="PANTHER" id="PTHR11716">
    <property type="entry name" value="PHOSPHOLIPASE A2 FAMILY MEMBER"/>
    <property type="match status" value="1"/>
</dbReference>
<dbReference type="Pfam" id="PF00068">
    <property type="entry name" value="Phospholip_A2_1"/>
    <property type="match status" value="1"/>
</dbReference>
<dbReference type="PRINTS" id="PR00389">
    <property type="entry name" value="PHPHLIPASEA2"/>
</dbReference>
<dbReference type="SMART" id="SM00085">
    <property type="entry name" value="PA2c"/>
    <property type="match status" value="1"/>
</dbReference>
<dbReference type="SUPFAM" id="SSF48619">
    <property type="entry name" value="Phospholipase A2, PLA2"/>
    <property type="match status" value="1"/>
</dbReference>
<dbReference type="PROSITE" id="PS00119">
    <property type="entry name" value="PA2_ASP"/>
    <property type="match status" value="1"/>
</dbReference>
<dbReference type="PROSITE" id="PS00118">
    <property type="entry name" value="PA2_HIS"/>
    <property type="match status" value="1"/>
</dbReference>
<organism>
    <name type="scientific">Austrelaps superbus</name>
    <name type="common">Lowland copperhead snake</name>
    <name type="synonym">Hoplocephalus superbus</name>
    <dbReference type="NCBI Taxonomy" id="29156"/>
    <lineage>
        <taxon>Eukaryota</taxon>
        <taxon>Metazoa</taxon>
        <taxon>Chordata</taxon>
        <taxon>Craniata</taxon>
        <taxon>Vertebrata</taxon>
        <taxon>Euteleostomi</taxon>
        <taxon>Lepidosauria</taxon>
        <taxon>Squamata</taxon>
        <taxon>Bifurcata</taxon>
        <taxon>Unidentata</taxon>
        <taxon>Episquamata</taxon>
        <taxon>Toxicofera</taxon>
        <taxon>Serpentes</taxon>
        <taxon>Colubroidea</taxon>
        <taxon>Elapidae</taxon>
        <taxon>Hydrophiinae</taxon>
        <taxon>Austrelaps</taxon>
    </lineage>
</organism>
<feature type="signal peptide" evidence="2">
    <location>
        <begin position="1"/>
        <end position="19"/>
    </location>
</feature>
<feature type="propeptide" id="PRO_0000022797" evidence="2">
    <location>
        <begin position="20"/>
        <end position="27"/>
    </location>
</feature>
<feature type="chain" id="PRO_0000022798" description="Acidic phospholipase A2 S15-109">
    <location>
        <begin position="28"/>
        <end position="144"/>
    </location>
</feature>
<feature type="active site" evidence="1">
    <location>
        <position position="75"/>
    </location>
</feature>
<feature type="active site" evidence="1">
    <location>
        <position position="120"/>
    </location>
</feature>
<feature type="binding site" evidence="1">
    <location>
        <position position="55"/>
    </location>
    <ligand>
        <name>Ca(2+)</name>
        <dbReference type="ChEBI" id="CHEBI:29108"/>
    </ligand>
</feature>
<feature type="binding site" evidence="1">
    <location>
        <position position="57"/>
    </location>
    <ligand>
        <name>Ca(2+)</name>
        <dbReference type="ChEBI" id="CHEBI:29108"/>
    </ligand>
</feature>
<feature type="binding site" evidence="1">
    <location>
        <position position="59"/>
    </location>
    <ligand>
        <name>Ca(2+)</name>
        <dbReference type="ChEBI" id="CHEBI:29108"/>
    </ligand>
</feature>
<feature type="binding site" evidence="1">
    <location>
        <position position="76"/>
    </location>
    <ligand>
        <name>Ca(2+)</name>
        <dbReference type="ChEBI" id="CHEBI:29108"/>
    </ligand>
</feature>
<feature type="disulfide bond" evidence="1">
    <location>
        <begin position="38"/>
        <end position="98"/>
    </location>
</feature>
<feature type="disulfide bond" evidence="1">
    <location>
        <begin position="54"/>
        <end position="143"/>
    </location>
</feature>
<feature type="disulfide bond" evidence="1">
    <location>
        <begin position="56"/>
        <end position="72"/>
    </location>
</feature>
<feature type="disulfide bond" evidence="1">
    <location>
        <begin position="71"/>
        <end position="126"/>
    </location>
</feature>
<feature type="disulfide bond" evidence="1">
    <location>
        <begin position="78"/>
        <end position="119"/>
    </location>
</feature>
<feature type="disulfide bond" evidence="1">
    <location>
        <begin position="87"/>
        <end position="112"/>
    </location>
</feature>
<feature type="disulfide bond" evidence="1">
    <location>
        <begin position="105"/>
        <end position="117"/>
    </location>
</feature>
<evidence type="ECO:0000250" key="1"/>
<evidence type="ECO:0000255" key="2"/>
<evidence type="ECO:0000255" key="3">
    <source>
        <dbReference type="PROSITE-ProRule" id="PRU10035"/>
    </source>
</evidence>
<evidence type="ECO:0000255" key="4">
    <source>
        <dbReference type="PROSITE-ProRule" id="PRU10036"/>
    </source>
</evidence>
<evidence type="ECO:0000305" key="5"/>
<name>PA2A7_AUSSU</name>
<keyword id="KW-0106">Calcium</keyword>
<keyword id="KW-1015">Disulfide bond</keyword>
<keyword id="KW-1199">Hemostasis impairing toxin</keyword>
<keyword id="KW-0378">Hydrolase</keyword>
<keyword id="KW-0442">Lipid degradation</keyword>
<keyword id="KW-0443">Lipid metabolism</keyword>
<keyword id="KW-0479">Metal-binding</keyword>
<keyword id="KW-1201">Platelet aggregation inhibiting toxin</keyword>
<keyword id="KW-0964">Secreted</keyword>
<keyword id="KW-0732">Signal</keyword>
<keyword id="KW-0800">Toxin</keyword>